<protein>
    <recommendedName>
        <fullName evidence="1">Serine hydroxymethyltransferase</fullName>
        <shortName evidence="1">SHMT</shortName>
        <shortName evidence="1">Serine methylase</shortName>
        <ecNumber evidence="1">2.1.2.1</ecNumber>
    </recommendedName>
</protein>
<gene>
    <name evidence="1" type="primary">glyA</name>
    <name type="ordered locus">EcE24377A_2836</name>
</gene>
<comment type="function">
    <text evidence="1">Catalyzes the reversible interconversion of serine and glycine with tetrahydrofolate (THF) serving as the one-carbon carrier. This reaction serves as the major source of one-carbon groups required for the biosynthesis of purines, thymidylate, methionine, and other important biomolecules. Also exhibits THF-independent aldolase activity toward beta-hydroxyamino acids, producing glycine and aldehydes, via a retro-aldol mechanism.</text>
</comment>
<comment type="catalytic activity">
    <reaction evidence="1">
        <text>(6R)-5,10-methylene-5,6,7,8-tetrahydrofolate + glycine + H2O = (6S)-5,6,7,8-tetrahydrofolate + L-serine</text>
        <dbReference type="Rhea" id="RHEA:15481"/>
        <dbReference type="ChEBI" id="CHEBI:15377"/>
        <dbReference type="ChEBI" id="CHEBI:15636"/>
        <dbReference type="ChEBI" id="CHEBI:33384"/>
        <dbReference type="ChEBI" id="CHEBI:57305"/>
        <dbReference type="ChEBI" id="CHEBI:57453"/>
        <dbReference type="EC" id="2.1.2.1"/>
    </reaction>
</comment>
<comment type="cofactor">
    <cofactor evidence="1">
        <name>pyridoxal 5'-phosphate</name>
        <dbReference type="ChEBI" id="CHEBI:597326"/>
    </cofactor>
</comment>
<comment type="pathway">
    <text evidence="1">One-carbon metabolism; tetrahydrofolate interconversion.</text>
</comment>
<comment type="pathway">
    <text evidence="1">Amino-acid biosynthesis; glycine biosynthesis; glycine from L-serine: step 1/1.</text>
</comment>
<comment type="subunit">
    <text evidence="1">Homodimer.</text>
</comment>
<comment type="subcellular location">
    <subcellularLocation>
        <location evidence="1">Cytoplasm</location>
    </subcellularLocation>
</comment>
<comment type="similarity">
    <text evidence="1">Belongs to the SHMT family.</text>
</comment>
<sequence length="417" mass="45317">MLKREMNIADYDAELWQAMEQEKVRQEEHIELIASENYTSPRVMQAQGSQLTNKYAEGYPGKRYYGGCEYVDIVEQLAIDRAKELFGADYANVQPHSGSQANFAVYTALLEPGDTVLGMNLAHGGHLTHGSPVNFSGKLYNIVPYGIDATGHIDYADLEKQAKEHKPKMIIGGFSAYSGVVDWAKMREIADSIGAYLFVDMAHVAGLVAAGVYPNPVPHAHVVTTTTHKTLAGPRGGLILAKGGSEELYKKLNSAVFPGGQGGPLMHVIAGKAVALKEAMEPEFKTYQQQVAKNAKAMVEVFLERGYKVVSGGTDNHLFLVDLVDKNLTGKEADAALGRANITVNKNSVPNDPKSPFVTSGIRVGTPAITRRGFKEAEAKELAGWMCDVLDSINDEAVIERIKGKVLDICARYPVYA</sequence>
<accession>A7ZPZ4</accession>
<keyword id="KW-0007">Acetylation</keyword>
<keyword id="KW-0028">Amino-acid biosynthesis</keyword>
<keyword id="KW-0963">Cytoplasm</keyword>
<keyword id="KW-0554">One-carbon metabolism</keyword>
<keyword id="KW-0663">Pyridoxal phosphate</keyword>
<keyword id="KW-1185">Reference proteome</keyword>
<keyword id="KW-0808">Transferase</keyword>
<proteinExistence type="inferred from homology"/>
<reference key="1">
    <citation type="journal article" date="2008" name="J. Bacteriol.">
        <title>The pangenome structure of Escherichia coli: comparative genomic analysis of E. coli commensal and pathogenic isolates.</title>
        <authorList>
            <person name="Rasko D.A."/>
            <person name="Rosovitz M.J."/>
            <person name="Myers G.S.A."/>
            <person name="Mongodin E.F."/>
            <person name="Fricke W.F."/>
            <person name="Gajer P."/>
            <person name="Crabtree J."/>
            <person name="Sebaihia M."/>
            <person name="Thomson N.R."/>
            <person name="Chaudhuri R."/>
            <person name="Henderson I.R."/>
            <person name="Sperandio V."/>
            <person name="Ravel J."/>
        </authorList>
    </citation>
    <scope>NUCLEOTIDE SEQUENCE [LARGE SCALE GENOMIC DNA]</scope>
    <source>
        <strain>E24377A / ETEC</strain>
    </source>
</reference>
<organism>
    <name type="scientific">Escherichia coli O139:H28 (strain E24377A / ETEC)</name>
    <dbReference type="NCBI Taxonomy" id="331111"/>
    <lineage>
        <taxon>Bacteria</taxon>
        <taxon>Pseudomonadati</taxon>
        <taxon>Pseudomonadota</taxon>
        <taxon>Gammaproteobacteria</taxon>
        <taxon>Enterobacterales</taxon>
        <taxon>Enterobacteriaceae</taxon>
        <taxon>Escherichia</taxon>
    </lineage>
</organism>
<evidence type="ECO:0000255" key="1">
    <source>
        <dbReference type="HAMAP-Rule" id="MF_00051"/>
    </source>
</evidence>
<name>GLYA_ECO24</name>
<dbReference type="EC" id="2.1.2.1" evidence="1"/>
<dbReference type="EMBL" id="CP000800">
    <property type="protein sequence ID" value="ABV19547.1"/>
    <property type="molecule type" value="Genomic_DNA"/>
</dbReference>
<dbReference type="RefSeq" id="WP_000919159.1">
    <property type="nucleotide sequence ID" value="NC_009801.1"/>
</dbReference>
<dbReference type="SMR" id="A7ZPZ4"/>
<dbReference type="GeneID" id="89517346"/>
<dbReference type="KEGG" id="ecw:EcE24377A_2836"/>
<dbReference type="HOGENOM" id="CLU_022477_2_1_6"/>
<dbReference type="UniPathway" id="UPA00193"/>
<dbReference type="UniPathway" id="UPA00288">
    <property type="reaction ID" value="UER01023"/>
</dbReference>
<dbReference type="Proteomes" id="UP000001122">
    <property type="component" value="Chromosome"/>
</dbReference>
<dbReference type="GO" id="GO:0005829">
    <property type="term" value="C:cytosol"/>
    <property type="evidence" value="ECO:0007669"/>
    <property type="project" value="TreeGrafter"/>
</dbReference>
<dbReference type="GO" id="GO:0004372">
    <property type="term" value="F:glycine hydroxymethyltransferase activity"/>
    <property type="evidence" value="ECO:0007669"/>
    <property type="project" value="UniProtKB-UniRule"/>
</dbReference>
<dbReference type="GO" id="GO:0030170">
    <property type="term" value="F:pyridoxal phosphate binding"/>
    <property type="evidence" value="ECO:0007669"/>
    <property type="project" value="UniProtKB-UniRule"/>
</dbReference>
<dbReference type="GO" id="GO:0019264">
    <property type="term" value="P:glycine biosynthetic process from serine"/>
    <property type="evidence" value="ECO:0007669"/>
    <property type="project" value="UniProtKB-UniRule"/>
</dbReference>
<dbReference type="GO" id="GO:0035999">
    <property type="term" value="P:tetrahydrofolate interconversion"/>
    <property type="evidence" value="ECO:0007669"/>
    <property type="project" value="UniProtKB-UniRule"/>
</dbReference>
<dbReference type="CDD" id="cd00378">
    <property type="entry name" value="SHMT"/>
    <property type="match status" value="1"/>
</dbReference>
<dbReference type="FunFam" id="3.40.640.10:FF:000001">
    <property type="entry name" value="Serine hydroxymethyltransferase"/>
    <property type="match status" value="1"/>
</dbReference>
<dbReference type="FunFam" id="3.90.1150.10:FF:000003">
    <property type="entry name" value="Serine hydroxymethyltransferase"/>
    <property type="match status" value="1"/>
</dbReference>
<dbReference type="Gene3D" id="3.90.1150.10">
    <property type="entry name" value="Aspartate Aminotransferase, domain 1"/>
    <property type="match status" value="1"/>
</dbReference>
<dbReference type="Gene3D" id="3.40.640.10">
    <property type="entry name" value="Type I PLP-dependent aspartate aminotransferase-like (Major domain)"/>
    <property type="match status" value="1"/>
</dbReference>
<dbReference type="HAMAP" id="MF_00051">
    <property type="entry name" value="SHMT"/>
    <property type="match status" value="1"/>
</dbReference>
<dbReference type="InterPro" id="IPR015424">
    <property type="entry name" value="PyrdxlP-dep_Trfase"/>
</dbReference>
<dbReference type="InterPro" id="IPR015421">
    <property type="entry name" value="PyrdxlP-dep_Trfase_major"/>
</dbReference>
<dbReference type="InterPro" id="IPR015422">
    <property type="entry name" value="PyrdxlP-dep_Trfase_small"/>
</dbReference>
<dbReference type="InterPro" id="IPR001085">
    <property type="entry name" value="Ser_HO-MeTrfase"/>
</dbReference>
<dbReference type="InterPro" id="IPR049943">
    <property type="entry name" value="Ser_HO-MeTrfase-like"/>
</dbReference>
<dbReference type="InterPro" id="IPR019798">
    <property type="entry name" value="Ser_HO-MeTrfase_PLP_BS"/>
</dbReference>
<dbReference type="InterPro" id="IPR039429">
    <property type="entry name" value="SHMT-like_dom"/>
</dbReference>
<dbReference type="NCBIfam" id="NF000586">
    <property type="entry name" value="PRK00011.1"/>
    <property type="match status" value="1"/>
</dbReference>
<dbReference type="PANTHER" id="PTHR11680">
    <property type="entry name" value="SERINE HYDROXYMETHYLTRANSFERASE"/>
    <property type="match status" value="1"/>
</dbReference>
<dbReference type="PANTHER" id="PTHR11680:SF50">
    <property type="entry name" value="SERINE HYDROXYMETHYLTRANSFERASE"/>
    <property type="match status" value="1"/>
</dbReference>
<dbReference type="Pfam" id="PF00464">
    <property type="entry name" value="SHMT"/>
    <property type="match status" value="1"/>
</dbReference>
<dbReference type="PIRSF" id="PIRSF000412">
    <property type="entry name" value="SHMT"/>
    <property type="match status" value="1"/>
</dbReference>
<dbReference type="SUPFAM" id="SSF53383">
    <property type="entry name" value="PLP-dependent transferases"/>
    <property type="match status" value="1"/>
</dbReference>
<dbReference type="PROSITE" id="PS00096">
    <property type="entry name" value="SHMT"/>
    <property type="match status" value="1"/>
</dbReference>
<feature type="chain" id="PRO_1000057365" description="Serine hydroxymethyltransferase">
    <location>
        <begin position="1"/>
        <end position="417"/>
    </location>
</feature>
<feature type="binding site" evidence="1">
    <location>
        <position position="121"/>
    </location>
    <ligand>
        <name>(6S)-5,6,7,8-tetrahydrofolate</name>
        <dbReference type="ChEBI" id="CHEBI:57453"/>
    </ligand>
</feature>
<feature type="binding site" evidence="1">
    <location>
        <begin position="125"/>
        <end position="127"/>
    </location>
    <ligand>
        <name>(6S)-5,6,7,8-tetrahydrofolate</name>
        <dbReference type="ChEBI" id="CHEBI:57453"/>
    </ligand>
</feature>
<feature type="binding site" evidence="1">
    <location>
        <begin position="355"/>
        <end position="357"/>
    </location>
    <ligand>
        <name>(6S)-5,6,7,8-tetrahydrofolate</name>
        <dbReference type="ChEBI" id="CHEBI:57453"/>
    </ligand>
</feature>
<feature type="site" description="Plays an important role in substrate specificity" evidence="1">
    <location>
        <position position="228"/>
    </location>
</feature>
<feature type="modified residue" description="N6-acetyllysine" evidence="1">
    <location>
        <position position="54"/>
    </location>
</feature>
<feature type="modified residue" description="N6-(pyridoxal phosphate)lysine" evidence="1">
    <location>
        <position position="229"/>
    </location>
</feature>
<feature type="modified residue" description="N6-acetyllysine" evidence="1">
    <location>
        <position position="250"/>
    </location>
</feature>
<feature type="modified residue" description="N6-acetyllysine" evidence="1">
    <location>
        <position position="285"/>
    </location>
</feature>
<feature type="modified residue" description="N6-acetyllysine" evidence="1">
    <location>
        <position position="354"/>
    </location>
</feature>
<feature type="modified residue" description="N6-acetyllysine" evidence="1">
    <location>
        <position position="375"/>
    </location>
</feature>